<evidence type="ECO:0000255" key="1">
    <source>
        <dbReference type="HAMAP-Rule" id="MF_00553"/>
    </source>
</evidence>
<reference key="1">
    <citation type="journal article" date="2007" name="Genome Biol.">
        <title>Genome analysis and genome-wide proteomics of Thermococcus gammatolerans, the most radioresistant organism known amongst the Archaea.</title>
        <authorList>
            <person name="Zivanovic Y."/>
            <person name="Armengaud J."/>
            <person name="Lagorce A."/>
            <person name="Leplat C."/>
            <person name="Guerin P."/>
            <person name="Dutertre M."/>
            <person name="Anthouard V."/>
            <person name="Forterre P."/>
            <person name="Wincker P."/>
            <person name="Confalonieri F."/>
        </authorList>
    </citation>
    <scope>NUCLEOTIDE SEQUENCE [LARGE SCALE GENOMIC DNA]</scope>
    <source>
        <strain>DSM 15229 / JCM 11827 / EJ3</strain>
    </source>
</reference>
<feature type="chain" id="PRO_1000212010" description="Proteasome-activating nucleotidase">
    <location>
        <begin position="1"/>
        <end position="397"/>
    </location>
</feature>
<feature type="region of interest" description="Docks into pockets in the proteasome alpha-ring to cause gate opening" evidence="1">
    <location>
        <begin position="395"/>
        <end position="397"/>
    </location>
</feature>
<feature type="coiled-coil region" evidence="1">
    <location>
        <begin position="12"/>
        <end position="58"/>
    </location>
</feature>
<feature type="binding site" evidence="1">
    <location>
        <begin position="182"/>
        <end position="187"/>
    </location>
    <ligand>
        <name>ATP</name>
        <dbReference type="ChEBI" id="CHEBI:30616"/>
    </ligand>
</feature>
<feature type="binding site" evidence="1">
    <location>
        <position position="321"/>
    </location>
    <ligand>
        <name>ATP</name>
        <dbReference type="ChEBI" id="CHEBI:30616"/>
    </ligand>
</feature>
<sequence>MGSFDEVSHDTGYEDYITFLKRRIRQLELQVRTLEADKERLERELSRLRTEMSRLRQPPAFAGTVIEVLDDDRAIVQNYNGPRFVVRIAPWIERDKLKPGSRVALDQRTMAIVELLPTEKDPSVLGFEVIEKPRVTYQDIGGLERQLAELREAVELPLKHPELFEKVGIEPPKGVLLYGPPGCGKTLMAKAVANHVNATFIRVVGSELVRKFIGEGARLVHELFEMAKEKAPTIIFIDEIDAIGAKRMDETTGGEREVNRTLMQLLAEMDGFDPRGNVKVIAATNRPDILDPALLRPGRFDRLIEVPLPDFRGRLEILKVHTRKMNLRNVDLSIIADITEGASGADLKAIATEAGMFAIRDRRTYVTQEDFLKAVDKVLGAEKRLAQAIAMHEVMYG</sequence>
<protein>
    <recommendedName>
        <fullName evidence="1">Proteasome-activating nucleotidase</fullName>
        <shortName evidence="1">PAN</shortName>
    </recommendedName>
    <alternativeName>
        <fullName evidence="1">Proteasomal ATPase</fullName>
    </alternativeName>
    <alternativeName>
        <fullName evidence="1">Proteasome regulatory ATPase</fullName>
    </alternativeName>
    <alternativeName>
        <fullName evidence="1">Proteasome regulatory particle</fullName>
    </alternativeName>
</protein>
<name>PAN_THEGJ</name>
<gene>
    <name evidence="1" type="primary">pan</name>
    <name type="ordered locus">TGAM_1408</name>
</gene>
<organism>
    <name type="scientific">Thermococcus gammatolerans (strain DSM 15229 / JCM 11827 / EJ3)</name>
    <dbReference type="NCBI Taxonomy" id="593117"/>
    <lineage>
        <taxon>Archaea</taxon>
        <taxon>Methanobacteriati</taxon>
        <taxon>Methanobacteriota</taxon>
        <taxon>Thermococci</taxon>
        <taxon>Thermococcales</taxon>
        <taxon>Thermococcaceae</taxon>
        <taxon>Thermococcus</taxon>
    </lineage>
</organism>
<dbReference type="EMBL" id="CP001398">
    <property type="protein sequence ID" value="ACS33910.1"/>
    <property type="molecule type" value="Genomic_DNA"/>
</dbReference>
<dbReference type="RefSeq" id="WP_015859021.1">
    <property type="nucleotide sequence ID" value="NC_012804.1"/>
</dbReference>
<dbReference type="SMR" id="C5A6P8"/>
<dbReference type="STRING" id="593117.TGAM_1408"/>
<dbReference type="PaxDb" id="593117-TGAM_1408"/>
<dbReference type="GeneID" id="7988141"/>
<dbReference type="KEGG" id="tga:TGAM_1408"/>
<dbReference type="PATRIC" id="fig|593117.10.peg.1410"/>
<dbReference type="eggNOG" id="arCOG01306">
    <property type="taxonomic scope" value="Archaea"/>
</dbReference>
<dbReference type="HOGENOM" id="CLU_000688_2_0_2"/>
<dbReference type="OrthoDB" id="77269at2157"/>
<dbReference type="Proteomes" id="UP000001488">
    <property type="component" value="Chromosome"/>
</dbReference>
<dbReference type="GO" id="GO:0005737">
    <property type="term" value="C:cytoplasm"/>
    <property type="evidence" value="ECO:0007669"/>
    <property type="project" value="UniProtKB-SubCell"/>
</dbReference>
<dbReference type="GO" id="GO:0022623">
    <property type="term" value="C:proteasome-activating nucleotidase complex"/>
    <property type="evidence" value="ECO:0007669"/>
    <property type="project" value="UniProtKB-UniRule"/>
</dbReference>
<dbReference type="GO" id="GO:0005524">
    <property type="term" value="F:ATP binding"/>
    <property type="evidence" value="ECO:0007669"/>
    <property type="project" value="UniProtKB-UniRule"/>
</dbReference>
<dbReference type="GO" id="GO:0016887">
    <property type="term" value="F:ATP hydrolysis activity"/>
    <property type="evidence" value="ECO:0007669"/>
    <property type="project" value="UniProtKB-UniRule"/>
</dbReference>
<dbReference type="GO" id="GO:0010498">
    <property type="term" value="P:proteasomal protein catabolic process"/>
    <property type="evidence" value="ECO:0007669"/>
    <property type="project" value="UniProtKB-UniRule"/>
</dbReference>
<dbReference type="GO" id="GO:0043335">
    <property type="term" value="P:protein unfolding"/>
    <property type="evidence" value="ECO:0007669"/>
    <property type="project" value="UniProtKB-UniRule"/>
</dbReference>
<dbReference type="CDD" id="cd19502">
    <property type="entry name" value="RecA-like_PAN_like"/>
    <property type="match status" value="1"/>
</dbReference>
<dbReference type="FunFam" id="3.40.50.300:FF:000033">
    <property type="entry name" value="26S protease regulatory subunit 6B"/>
    <property type="match status" value="1"/>
</dbReference>
<dbReference type="FunFam" id="1.10.8.60:FF:000006">
    <property type="entry name" value="26S protease regulatory subunit 8"/>
    <property type="match status" value="1"/>
</dbReference>
<dbReference type="Gene3D" id="1.10.8.60">
    <property type="match status" value="1"/>
</dbReference>
<dbReference type="Gene3D" id="2.40.50.140">
    <property type="entry name" value="Nucleic acid-binding proteins"/>
    <property type="match status" value="1"/>
</dbReference>
<dbReference type="Gene3D" id="3.40.50.300">
    <property type="entry name" value="P-loop containing nucleotide triphosphate hydrolases"/>
    <property type="match status" value="1"/>
</dbReference>
<dbReference type="HAMAP" id="MF_00553">
    <property type="entry name" value="PAN"/>
    <property type="match status" value="1"/>
</dbReference>
<dbReference type="InterPro" id="IPR050221">
    <property type="entry name" value="26S_Proteasome_ATPase"/>
</dbReference>
<dbReference type="InterPro" id="IPR003593">
    <property type="entry name" value="AAA+_ATPase"/>
</dbReference>
<dbReference type="InterPro" id="IPR041569">
    <property type="entry name" value="AAA_lid_3"/>
</dbReference>
<dbReference type="InterPro" id="IPR003959">
    <property type="entry name" value="ATPase_AAA_core"/>
</dbReference>
<dbReference type="InterPro" id="IPR003960">
    <property type="entry name" value="ATPase_AAA_CS"/>
</dbReference>
<dbReference type="InterPro" id="IPR012340">
    <property type="entry name" value="NA-bd_OB-fold"/>
</dbReference>
<dbReference type="InterPro" id="IPR023501">
    <property type="entry name" value="Nucleotidase_PAN"/>
</dbReference>
<dbReference type="InterPro" id="IPR027417">
    <property type="entry name" value="P-loop_NTPase"/>
</dbReference>
<dbReference type="InterPro" id="IPR032501">
    <property type="entry name" value="Prot_ATP_ID_OB_2nd"/>
</dbReference>
<dbReference type="NCBIfam" id="NF003069">
    <property type="entry name" value="PRK03992.1"/>
    <property type="match status" value="1"/>
</dbReference>
<dbReference type="NCBIfam" id="TIGR01242">
    <property type="entry name" value="proteasome-activating nucleotidase"/>
    <property type="match status" value="1"/>
</dbReference>
<dbReference type="PANTHER" id="PTHR23073">
    <property type="entry name" value="26S PROTEASOME REGULATORY SUBUNIT"/>
    <property type="match status" value="1"/>
</dbReference>
<dbReference type="Pfam" id="PF00004">
    <property type="entry name" value="AAA"/>
    <property type="match status" value="1"/>
</dbReference>
<dbReference type="Pfam" id="PF17862">
    <property type="entry name" value="AAA_lid_3"/>
    <property type="match status" value="1"/>
</dbReference>
<dbReference type="Pfam" id="PF16450">
    <property type="entry name" value="Prot_ATP_ID_OB_C"/>
    <property type="match status" value="1"/>
</dbReference>
<dbReference type="SMART" id="SM00382">
    <property type="entry name" value="AAA"/>
    <property type="match status" value="1"/>
</dbReference>
<dbReference type="SUPFAM" id="SSF52540">
    <property type="entry name" value="P-loop containing nucleoside triphosphate hydrolases"/>
    <property type="match status" value="1"/>
</dbReference>
<dbReference type="PROSITE" id="PS00674">
    <property type="entry name" value="AAA"/>
    <property type="match status" value="1"/>
</dbReference>
<keyword id="KW-0067">ATP-binding</keyword>
<keyword id="KW-0143">Chaperone</keyword>
<keyword id="KW-0175">Coiled coil</keyword>
<keyword id="KW-0963">Cytoplasm</keyword>
<keyword id="KW-0547">Nucleotide-binding</keyword>
<keyword id="KW-0647">Proteasome</keyword>
<keyword id="KW-1185">Reference proteome</keyword>
<accession>C5A6P8</accession>
<comment type="function">
    <text evidence="1">ATPase which is responsible for recognizing, binding, unfolding and translocation of substrate proteins into the archaeal 20S proteasome core particle. Is essential for opening the gate of the 20S proteasome via an interaction with its C-terminus, thereby allowing substrate entry and access to the site of proteolysis. Thus, the C-termini of the proteasomal ATPase function like a 'key in a lock' to induce gate opening and therefore regulate proteolysis. Unfolding activity requires energy from ATP hydrolysis, whereas ATP binding alone promotes ATPase-20S proteasome association which triggers gate opening, and supports translocation of unfolded substrates.</text>
</comment>
<comment type="subunit">
    <text evidence="1">Homohexamer. The hexameric complex has a two-ring architecture resembling a top hat that caps the 20S proteasome core at one or both ends. Upon ATP-binding, the C-terminus of PAN interacts with the alpha-rings of the proteasome core by binding to the intersubunit pockets.</text>
</comment>
<comment type="subcellular location">
    <subcellularLocation>
        <location evidence="1">Cytoplasm</location>
    </subcellularLocation>
</comment>
<comment type="domain">
    <text evidence="1">Consists of three main regions, an N-terminal coiled-coil domain that may assist in substrate recognition, an interdomain involved in PAN hexamerization, and a C-terminal ATPase domain of the AAA type.</text>
</comment>
<comment type="similarity">
    <text evidence="1">Belongs to the AAA ATPase family.</text>
</comment>
<proteinExistence type="inferred from homology"/>